<gene>
    <name evidence="7" type="primary">RIP1</name>
</gene>
<organism>
    <name type="scientific">Phytolacca heterotepala</name>
    <name type="common">Mexican pokeweed</name>
    <dbReference type="NCBI Taxonomy" id="248308"/>
    <lineage>
        <taxon>Eukaryota</taxon>
        <taxon>Viridiplantae</taxon>
        <taxon>Streptophyta</taxon>
        <taxon>Embryophyta</taxon>
        <taxon>Tracheophyta</taxon>
        <taxon>Spermatophyta</taxon>
        <taxon>Magnoliopsida</taxon>
        <taxon>eudicotyledons</taxon>
        <taxon>Gunneridae</taxon>
        <taxon>Pentapetalae</taxon>
        <taxon>Caryophyllales</taxon>
        <taxon>Phytolaccaceae</taxon>
        <taxon>Phytolacca</taxon>
    </lineage>
</organism>
<comment type="function">
    <text evidence="4">Inhibits protein synthesis in vitro.</text>
</comment>
<comment type="catalytic activity">
    <reaction evidence="4">
        <text>Endohydrolysis of the N-glycosidic bond at one specific adenosine on the 28S rRNA.</text>
        <dbReference type="EC" id="3.2.2.22"/>
    </reaction>
</comment>
<comment type="mass spectrometry"/>
<comment type="similarity">
    <text evidence="3">Belongs to the ribosome-inactivating protein family. Type 1 RIP subfamily.</text>
</comment>
<feature type="signal peptide" evidence="4">
    <location>
        <begin position="1"/>
        <end position="22"/>
    </location>
</feature>
<feature type="chain" id="PRO_0000352792" description="Heterotepalin-4" evidence="4">
    <location>
        <begin position="23"/>
        <end position="283"/>
    </location>
</feature>
<feature type="propeptide" id="PRO_0000352793" evidence="4">
    <location>
        <begin position="284"/>
        <end position="312"/>
    </location>
</feature>
<feature type="active site" evidence="2">
    <location>
        <position position="197"/>
    </location>
</feature>
<feature type="disulfide bond" evidence="1">
    <location>
        <begin position="56"/>
        <end position="280"/>
    </location>
</feature>
<feature type="disulfide bond" evidence="1">
    <location>
        <begin position="107"/>
        <end position="128"/>
    </location>
</feature>
<feature type="sequence conflict" description="In Ref. 1; AAQ95991." evidence="6" ref="1">
    <original>I</original>
    <variation>M</variation>
    <location>
        <position position="266"/>
    </location>
</feature>
<dbReference type="EC" id="3.2.2.22"/>
<dbReference type="EMBL" id="AY327475">
    <property type="protein sequence ID" value="AAQ95991.1"/>
    <property type="molecule type" value="mRNA"/>
</dbReference>
<dbReference type="SMR" id="Q6EH50"/>
<dbReference type="GO" id="GO:0016787">
    <property type="term" value="F:hydrolase activity"/>
    <property type="evidence" value="ECO:0000314"/>
    <property type="project" value="UniProtKB"/>
</dbReference>
<dbReference type="GO" id="GO:0030598">
    <property type="term" value="F:rRNA N-glycosylase activity"/>
    <property type="evidence" value="ECO:0000314"/>
    <property type="project" value="UniProtKB"/>
</dbReference>
<dbReference type="GO" id="GO:0090729">
    <property type="term" value="F:toxin activity"/>
    <property type="evidence" value="ECO:0007669"/>
    <property type="project" value="UniProtKB-KW"/>
</dbReference>
<dbReference type="GO" id="GO:0006952">
    <property type="term" value="P:defense response"/>
    <property type="evidence" value="ECO:0007669"/>
    <property type="project" value="UniProtKB-KW"/>
</dbReference>
<dbReference type="GO" id="GO:0017148">
    <property type="term" value="P:negative regulation of translation"/>
    <property type="evidence" value="ECO:0000314"/>
    <property type="project" value="UniProtKB"/>
</dbReference>
<dbReference type="FunFam" id="4.10.470.10:FF:000002">
    <property type="entry name" value="Antiviral protein I"/>
    <property type="match status" value="1"/>
</dbReference>
<dbReference type="FunFam" id="3.40.420.10:FF:000001">
    <property type="entry name" value="Ricin"/>
    <property type="match status" value="1"/>
</dbReference>
<dbReference type="Gene3D" id="3.40.420.10">
    <property type="entry name" value="Ricin (A subunit), domain 1"/>
    <property type="match status" value="1"/>
</dbReference>
<dbReference type="Gene3D" id="4.10.470.10">
    <property type="entry name" value="Ricin (A Subunit), domain 2"/>
    <property type="match status" value="1"/>
</dbReference>
<dbReference type="InterPro" id="IPR036041">
    <property type="entry name" value="Ribosome-inact_prot_sf"/>
</dbReference>
<dbReference type="InterPro" id="IPR017989">
    <property type="entry name" value="Ribosome_inactivat_1/2"/>
</dbReference>
<dbReference type="InterPro" id="IPR001574">
    <property type="entry name" value="Ribosome_inactivat_prot"/>
</dbReference>
<dbReference type="InterPro" id="IPR016138">
    <property type="entry name" value="Ribosome_inactivat_prot_sub1"/>
</dbReference>
<dbReference type="InterPro" id="IPR016139">
    <property type="entry name" value="Ribosome_inactivat_prot_sub2"/>
</dbReference>
<dbReference type="PANTHER" id="PTHR33453">
    <property type="match status" value="1"/>
</dbReference>
<dbReference type="PANTHER" id="PTHR33453:SF34">
    <property type="entry name" value="RIBOSOME-INACTIVATING PROTEIN"/>
    <property type="match status" value="1"/>
</dbReference>
<dbReference type="Pfam" id="PF00161">
    <property type="entry name" value="RIP"/>
    <property type="match status" value="1"/>
</dbReference>
<dbReference type="PRINTS" id="PR00396">
    <property type="entry name" value="SHIGARICIN"/>
</dbReference>
<dbReference type="SUPFAM" id="SSF56371">
    <property type="entry name" value="Ribosome inactivating proteins (RIP)"/>
    <property type="match status" value="1"/>
</dbReference>
<accession>Q6EH50</accession>
<reference evidence="7" key="1">
    <citation type="submission" date="2003-06" db="EMBL/GenBank/DDBJ databases">
        <authorList>
            <person name="Delli Bovi P."/>
            <person name="Corrado G."/>
        </authorList>
    </citation>
    <scope>NUCLEOTIDE SEQUENCE [MRNA]</scope>
</reference>
<reference evidence="6" key="2">
    <citation type="journal article" date="2007" name="Phytochemistry">
        <title>Isolation and characterization of heterotepalins, type 1 ribosome-inactivating proteins from Phytolacca heterotepala leaves.</title>
        <authorList>
            <person name="Di Maro A."/>
            <person name="Chambery A."/>
            <person name="Daniele A."/>
            <person name="Casoria P."/>
            <person name="Parente A."/>
        </authorList>
    </citation>
    <scope>PROTEIN SEQUENCE OF 23-37; 38-46; 71-81; 91-106; 109-120; 145-151; 158-173; 174-183; 203-209; 222-231; 232-240; 247-257 AND 262-283</scope>
    <scope>FUNCTION</scope>
    <scope>CATALYTIC ACTIVITY</scope>
    <scope>MASS SPECTROMETRY</scope>
    <source>
        <tissue evidence="4">Leaf</tissue>
    </source>
</reference>
<proteinExistence type="evidence at protein level"/>
<sequence>MKSMLVVTISVWLILAPTSTWAVNTIIYNVGSTTISKYATFLDDLRNEAKDPNLKCYGIPMLPNTNSNPKYVLVELQGSNKKTITLMLRRNNLYVMGYSDPFDTSKCRYHIFNDISGTERQDVETTLCPNSNSRVSKNINYDSRYPTLESKVGVKSRSQVQLGIQILDSDIGKISGVTSFSEKTEAEFLLVAIQISEAARFKYIENQVKTNFNRAFNPNPKVLNLEETWGKISTAIHDAKNGVLPKPLELVDASGAKWIVLRVDEIKPDVALLNYVSGSCQTTYNQNAMFPQLIMSTYYNYMANLGDLFEEF</sequence>
<evidence type="ECO:0000250" key="1">
    <source>
        <dbReference type="UniProtKB" id="P10297"/>
    </source>
</evidence>
<evidence type="ECO:0000250" key="2">
    <source>
        <dbReference type="UniProtKB" id="P20656"/>
    </source>
</evidence>
<evidence type="ECO:0000255" key="3"/>
<evidence type="ECO:0000269" key="4">
    <source>
    </source>
</evidence>
<evidence type="ECO:0000303" key="5">
    <source>
    </source>
</evidence>
<evidence type="ECO:0000305" key="6"/>
<evidence type="ECO:0000312" key="7">
    <source>
        <dbReference type="EMBL" id="AAQ95991.1"/>
    </source>
</evidence>
<keyword id="KW-0903">Direct protein sequencing</keyword>
<keyword id="KW-1015">Disulfide bond</keyword>
<keyword id="KW-0378">Hydrolase</keyword>
<keyword id="KW-0611">Plant defense</keyword>
<keyword id="KW-0652">Protein synthesis inhibitor</keyword>
<keyword id="KW-0732">Signal</keyword>
<keyword id="KW-0800">Toxin</keyword>
<name>RIP4_PHYHE</name>
<protein>
    <recommendedName>
        <fullName evidence="5">Heterotepalin-4</fullName>
        <ecNumber>3.2.2.22</ecNumber>
    </recommendedName>
    <alternativeName>
        <fullName evidence="1">Ribosome-inactivating protein</fullName>
    </alternativeName>
    <alternativeName>
        <fullName evidence="1">rRNA N-glycosidase</fullName>
    </alternativeName>
</protein>